<keyword id="KW-1003">Cell membrane</keyword>
<keyword id="KW-1015">Disulfide bond</keyword>
<keyword id="KW-0297">G-protein coupled receptor</keyword>
<keyword id="KW-0325">Glycoprotein</keyword>
<keyword id="KW-0472">Membrane</keyword>
<keyword id="KW-0552">Olfaction</keyword>
<keyword id="KW-0675">Receptor</keyword>
<keyword id="KW-1185">Reference proteome</keyword>
<keyword id="KW-0716">Sensory transduction</keyword>
<keyword id="KW-0807">Transducer</keyword>
<keyword id="KW-0812">Transmembrane</keyword>
<keyword id="KW-1133">Transmembrane helix</keyword>
<protein>
    <recommendedName>
        <fullName>Olfactory receptor 5F1</fullName>
    </recommendedName>
    <alternativeName>
        <fullName>Olfactory receptor 11-10</fullName>
        <shortName>OR11-10</shortName>
    </alternativeName>
    <alternativeName>
        <fullName>Olfactory receptor OR11-167</fullName>
    </alternativeName>
</protein>
<name>OR5F1_HUMAN</name>
<sequence>MTRKNYTSLTEFVLLGLADTLELQIILFLFFLVIYTLTVLGNLGMILLIRIDSQLHTPMYFFLANLSFVDVCNSTTITPKMLADLLSEKKTISFAGCFLQMYFFISLATTECILFGLMAYDRYAAICRPLLYSLIMSRTVYLKMAAGAFAAGLLNFMVNTSHVSSLSFCDSNVIHHFFCDSPPLFKLSCSDTILKESISSILAGVNIVGTLLVILSSYSYVLFSIFSMHSGEGRHRAFSTCASHLTAIILFYATCIYTYLRPSSSYSLNQDKVASVFYTVVIPMLNPLIYSLRSKEVKKALANVISRKRTSSFL</sequence>
<accession>O95221</accession>
<accession>Q495D1</accession>
<accession>Q6IFB9</accession>
<proteinExistence type="evidence at transcript level"/>
<organism>
    <name type="scientific">Homo sapiens</name>
    <name type="common">Human</name>
    <dbReference type="NCBI Taxonomy" id="9606"/>
    <lineage>
        <taxon>Eukaryota</taxon>
        <taxon>Metazoa</taxon>
        <taxon>Chordata</taxon>
        <taxon>Craniata</taxon>
        <taxon>Vertebrata</taxon>
        <taxon>Euteleostomi</taxon>
        <taxon>Mammalia</taxon>
        <taxon>Eutheria</taxon>
        <taxon>Euarchontoglires</taxon>
        <taxon>Primates</taxon>
        <taxon>Haplorrhini</taxon>
        <taxon>Catarrhini</taxon>
        <taxon>Hominidae</taxon>
        <taxon>Homo</taxon>
    </lineage>
</organism>
<dbReference type="EMBL" id="CH471076">
    <property type="protein sequence ID" value="EAW73694.1"/>
    <property type="molecule type" value="Genomic_DNA"/>
</dbReference>
<dbReference type="EMBL" id="BC101239">
    <property type="protein sequence ID" value="AAI01240.1"/>
    <property type="molecule type" value="mRNA"/>
</dbReference>
<dbReference type="EMBL" id="BC101241">
    <property type="protein sequence ID" value="AAI01242.1"/>
    <property type="molecule type" value="mRNA"/>
</dbReference>
<dbReference type="EMBL" id="AF065863">
    <property type="protein sequence ID" value="AAC70017.1"/>
    <property type="molecule type" value="Genomic_DNA"/>
</dbReference>
<dbReference type="EMBL" id="AF399527">
    <property type="protein sequence ID" value="AAK95012.1"/>
    <property type="molecule type" value="Genomic_DNA"/>
</dbReference>
<dbReference type="EMBL" id="BK004343">
    <property type="protein sequence ID" value="DAA04741.1"/>
    <property type="molecule type" value="Genomic_DNA"/>
</dbReference>
<dbReference type="CCDS" id="CCDS31515.1"/>
<dbReference type="RefSeq" id="NP_003688.1">
    <property type="nucleotide sequence ID" value="NM_003697.1"/>
</dbReference>
<dbReference type="SMR" id="O95221"/>
<dbReference type="BioGRID" id="130779">
    <property type="interactions" value="12"/>
</dbReference>
<dbReference type="FunCoup" id="O95221">
    <property type="interactions" value="429"/>
</dbReference>
<dbReference type="IntAct" id="O95221">
    <property type="interactions" value="10"/>
</dbReference>
<dbReference type="STRING" id="9606.ENSP00000278409"/>
<dbReference type="GlyCosmos" id="O95221">
    <property type="glycosylation" value="1 site, No reported glycans"/>
</dbReference>
<dbReference type="GlyGen" id="O95221">
    <property type="glycosylation" value="1 site"/>
</dbReference>
<dbReference type="iPTMnet" id="O95221"/>
<dbReference type="PhosphoSitePlus" id="O95221"/>
<dbReference type="BioMuta" id="OR5F1"/>
<dbReference type="MassIVE" id="O95221"/>
<dbReference type="PaxDb" id="9606-ENSP00000278409"/>
<dbReference type="ProteomicsDB" id="50725"/>
<dbReference type="Antibodypedia" id="58954">
    <property type="antibodies" value="95 antibodies from 21 providers"/>
</dbReference>
<dbReference type="DNASU" id="338674"/>
<dbReference type="Ensembl" id="ENST00000278409.1">
    <property type="protein sequence ID" value="ENSP00000278409.1"/>
    <property type="gene ID" value="ENSG00000149133.1"/>
</dbReference>
<dbReference type="GeneID" id="338674"/>
<dbReference type="KEGG" id="hsa:338674"/>
<dbReference type="MANE-Select" id="ENST00000278409.1">
    <property type="protein sequence ID" value="ENSP00000278409.1"/>
    <property type="RefSeq nucleotide sequence ID" value="NM_003697.1"/>
    <property type="RefSeq protein sequence ID" value="NP_003688.1"/>
</dbReference>
<dbReference type="UCSC" id="uc010riv.2">
    <property type="organism name" value="human"/>
</dbReference>
<dbReference type="AGR" id="HGNC:8343"/>
<dbReference type="CTD" id="338674"/>
<dbReference type="GeneCards" id="OR5F1"/>
<dbReference type="HGNC" id="HGNC:8343">
    <property type="gene designation" value="OR5F1"/>
</dbReference>
<dbReference type="HPA" id="ENSG00000149133">
    <property type="expression patterns" value="Not detected"/>
</dbReference>
<dbReference type="MIM" id="608492">
    <property type="type" value="gene"/>
</dbReference>
<dbReference type="neXtProt" id="NX_O95221"/>
<dbReference type="PharmGKB" id="PA32526"/>
<dbReference type="VEuPathDB" id="HostDB:ENSG00000149133"/>
<dbReference type="eggNOG" id="ENOG502SJ0I">
    <property type="taxonomic scope" value="Eukaryota"/>
</dbReference>
<dbReference type="GeneTree" id="ENSGT01120000271832"/>
<dbReference type="HOGENOM" id="CLU_012526_8_1_1"/>
<dbReference type="InParanoid" id="O95221"/>
<dbReference type="OMA" id="FYATCIY"/>
<dbReference type="OrthoDB" id="9440489at2759"/>
<dbReference type="PAN-GO" id="O95221">
    <property type="GO annotations" value="2 GO annotations based on evolutionary models"/>
</dbReference>
<dbReference type="PhylomeDB" id="O95221"/>
<dbReference type="TreeFam" id="TF352753"/>
<dbReference type="PathwayCommons" id="O95221"/>
<dbReference type="Reactome" id="R-HSA-9752946">
    <property type="pathway name" value="Expression and translocation of olfactory receptors"/>
</dbReference>
<dbReference type="SignaLink" id="O95221"/>
<dbReference type="BioGRID-ORCS" id="338674">
    <property type="hits" value="12 hits in 707 CRISPR screens"/>
</dbReference>
<dbReference type="GeneWiki" id="OR5F1"/>
<dbReference type="GenomeRNAi" id="338674"/>
<dbReference type="Pharos" id="O95221">
    <property type="development level" value="Tdark"/>
</dbReference>
<dbReference type="PRO" id="PR:O95221"/>
<dbReference type="Proteomes" id="UP000005640">
    <property type="component" value="Chromosome 11"/>
</dbReference>
<dbReference type="RNAct" id="O95221">
    <property type="molecule type" value="protein"/>
</dbReference>
<dbReference type="GO" id="GO:0016020">
    <property type="term" value="C:membrane"/>
    <property type="evidence" value="ECO:0000303"/>
    <property type="project" value="UniProtKB"/>
</dbReference>
<dbReference type="GO" id="GO:0005886">
    <property type="term" value="C:plasma membrane"/>
    <property type="evidence" value="ECO:0007669"/>
    <property type="project" value="UniProtKB-SubCell"/>
</dbReference>
<dbReference type="GO" id="GO:0004930">
    <property type="term" value="F:G protein-coupled receptor activity"/>
    <property type="evidence" value="ECO:0007669"/>
    <property type="project" value="UniProtKB-KW"/>
</dbReference>
<dbReference type="GO" id="GO:0005549">
    <property type="term" value="F:odorant binding"/>
    <property type="evidence" value="ECO:0000318"/>
    <property type="project" value="GO_Central"/>
</dbReference>
<dbReference type="GO" id="GO:0004984">
    <property type="term" value="F:olfactory receptor activity"/>
    <property type="evidence" value="ECO:0000318"/>
    <property type="project" value="GO_Central"/>
</dbReference>
<dbReference type="GO" id="GO:0007608">
    <property type="term" value="P:sensory perception of smell"/>
    <property type="evidence" value="ECO:0000303"/>
    <property type="project" value="UniProtKB"/>
</dbReference>
<dbReference type="CDD" id="cd15411">
    <property type="entry name" value="7tmA_OR8H-like"/>
    <property type="match status" value="1"/>
</dbReference>
<dbReference type="FunFam" id="1.10.1220.70:FF:000001">
    <property type="entry name" value="Olfactory receptor"/>
    <property type="match status" value="1"/>
</dbReference>
<dbReference type="FunFam" id="1.20.1070.10:FF:000003">
    <property type="entry name" value="Olfactory receptor"/>
    <property type="match status" value="1"/>
</dbReference>
<dbReference type="Gene3D" id="1.20.1070.10">
    <property type="entry name" value="Rhodopsin 7-helix transmembrane proteins"/>
    <property type="match status" value="1"/>
</dbReference>
<dbReference type="InterPro" id="IPR000276">
    <property type="entry name" value="GPCR_Rhodpsn"/>
</dbReference>
<dbReference type="InterPro" id="IPR017452">
    <property type="entry name" value="GPCR_Rhodpsn_7TM"/>
</dbReference>
<dbReference type="InterPro" id="IPR000725">
    <property type="entry name" value="Olfact_rcpt"/>
</dbReference>
<dbReference type="PANTHER" id="PTHR48018">
    <property type="entry name" value="OLFACTORY RECEPTOR"/>
    <property type="match status" value="1"/>
</dbReference>
<dbReference type="Pfam" id="PF13853">
    <property type="entry name" value="7tm_4"/>
    <property type="match status" value="1"/>
</dbReference>
<dbReference type="PRINTS" id="PR00237">
    <property type="entry name" value="GPCRRHODOPSN"/>
</dbReference>
<dbReference type="PRINTS" id="PR00245">
    <property type="entry name" value="OLFACTORYR"/>
</dbReference>
<dbReference type="SUPFAM" id="SSF81321">
    <property type="entry name" value="Family A G protein-coupled receptor-like"/>
    <property type="match status" value="1"/>
</dbReference>
<dbReference type="PROSITE" id="PS50262">
    <property type="entry name" value="G_PROTEIN_RECEP_F1_2"/>
    <property type="match status" value="1"/>
</dbReference>
<reference key="1">
    <citation type="submission" date="2005-07" db="EMBL/GenBank/DDBJ databases">
        <authorList>
            <person name="Mural R.J."/>
            <person name="Istrail S."/>
            <person name="Sutton G.G."/>
            <person name="Florea L."/>
            <person name="Halpern A.L."/>
            <person name="Mobarry C.M."/>
            <person name="Lippert R."/>
            <person name="Walenz B."/>
            <person name="Shatkay H."/>
            <person name="Dew I."/>
            <person name="Miller J.R."/>
            <person name="Flanigan M.J."/>
            <person name="Edwards N.J."/>
            <person name="Bolanos R."/>
            <person name="Fasulo D."/>
            <person name="Halldorsson B.V."/>
            <person name="Hannenhalli S."/>
            <person name="Turner R."/>
            <person name="Yooseph S."/>
            <person name="Lu F."/>
            <person name="Nusskern D.R."/>
            <person name="Shue B.C."/>
            <person name="Zheng X.H."/>
            <person name="Zhong F."/>
            <person name="Delcher A.L."/>
            <person name="Huson D.H."/>
            <person name="Kravitz S.A."/>
            <person name="Mouchard L."/>
            <person name="Reinert K."/>
            <person name="Remington K.A."/>
            <person name="Clark A.G."/>
            <person name="Waterman M.S."/>
            <person name="Eichler E.E."/>
            <person name="Adams M.D."/>
            <person name="Hunkapiller M.W."/>
            <person name="Myers E.W."/>
            <person name="Venter J.C."/>
        </authorList>
    </citation>
    <scope>NUCLEOTIDE SEQUENCE [LARGE SCALE GENOMIC DNA]</scope>
    <scope>VARIANT ASN-294</scope>
</reference>
<reference key="2">
    <citation type="journal article" date="2004" name="Genome Res.">
        <title>The status, quality, and expansion of the NIH full-length cDNA project: the Mammalian Gene Collection (MGC).</title>
        <authorList>
            <consortium name="The MGC Project Team"/>
        </authorList>
    </citation>
    <scope>NUCLEOTIDE SEQUENCE [LARGE SCALE MRNA]</scope>
    <scope>VARIANT ASN-294</scope>
</reference>
<reference key="3">
    <citation type="journal article" date="1998" name="Genomics">
        <title>Organization and evolution of olfactory receptor genes on human chromosome 11.</title>
        <authorList>
            <person name="Buettner J.A."/>
            <person name="Glusman G."/>
            <person name="Ben-Arie N."/>
            <person name="Ramos P."/>
            <person name="Lancet D."/>
            <person name="Evans G.A."/>
        </authorList>
    </citation>
    <scope>NUCLEOTIDE SEQUENCE [GENOMIC DNA] OF 68-283</scope>
</reference>
<reference key="4">
    <citation type="journal article" date="2002" name="Genomics">
        <title>DEFOG: a practical scheme for deciphering families of genes.</title>
        <authorList>
            <person name="Fuchs T."/>
            <person name="Malecova B."/>
            <person name="Linhart C."/>
            <person name="Sharan R."/>
            <person name="Khen M."/>
            <person name="Herwig R."/>
            <person name="Shmulevich D."/>
            <person name="Elkon R."/>
            <person name="Steinfath M."/>
            <person name="O'Brien J.K."/>
            <person name="Radelof U."/>
            <person name="Lehrach H."/>
            <person name="Lancet D."/>
            <person name="Shamir R."/>
        </authorList>
    </citation>
    <scope>NUCLEOTIDE SEQUENCE [GENOMIC DNA] OF 68-283</scope>
</reference>
<reference key="5">
    <citation type="journal article" date="2004" name="Proc. Natl. Acad. Sci. U.S.A.">
        <title>The human olfactory receptor gene family.</title>
        <authorList>
            <person name="Malnic B."/>
            <person name="Godfrey P.A."/>
            <person name="Buck L.B."/>
        </authorList>
    </citation>
    <scope>IDENTIFICATION</scope>
</reference>
<reference key="6">
    <citation type="journal article" date="2004" name="Proc. Natl. Acad. Sci. U.S.A.">
        <authorList>
            <person name="Malnic B."/>
            <person name="Godfrey P.A."/>
            <person name="Buck L.B."/>
        </authorList>
    </citation>
    <scope>ERRATUM OF PUBMED:14983052</scope>
</reference>
<feature type="chain" id="PRO_0000150595" description="Olfactory receptor 5F1">
    <location>
        <begin position="1"/>
        <end position="314"/>
    </location>
</feature>
<feature type="topological domain" description="Extracellular" evidence="1">
    <location>
        <begin position="1"/>
        <end position="25"/>
    </location>
</feature>
<feature type="transmembrane region" description="Helical; Name=1" evidence="1">
    <location>
        <begin position="26"/>
        <end position="46"/>
    </location>
</feature>
<feature type="topological domain" description="Cytoplasmic" evidence="1">
    <location>
        <begin position="47"/>
        <end position="54"/>
    </location>
</feature>
<feature type="transmembrane region" description="Helical; Name=2" evidence="1">
    <location>
        <begin position="55"/>
        <end position="75"/>
    </location>
</feature>
<feature type="topological domain" description="Extracellular" evidence="1">
    <location>
        <begin position="76"/>
        <end position="99"/>
    </location>
</feature>
<feature type="transmembrane region" description="Helical; Name=3" evidence="1">
    <location>
        <begin position="100"/>
        <end position="120"/>
    </location>
</feature>
<feature type="topological domain" description="Cytoplasmic" evidence="1">
    <location>
        <begin position="121"/>
        <end position="139"/>
    </location>
</feature>
<feature type="transmembrane region" description="Helical; Name=4" evidence="1">
    <location>
        <begin position="140"/>
        <end position="160"/>
    </location>
</feature>
<feature type="topological domain" description="Extracellular" evidence="1">
    <location>
        <begin position="161"/>
        <end position="196"/>
    </location>
</feature>
<feature type="transmembrane region" description="Helical; Name=5" evidence="1">
    <location>
        <begin position="197"/>
        <end position="217"/>
    </location>
</feature>
<feature type="topological domain" description="Cytoplasmic" evidence="1">
    <location>
        <begin position="218"/>
        <end position="237"/>
    </location>
</feature>
<feature type="transmembrane region" description="Helical; Name=6" evidence="1">
    <location>
        <begin position="238"/>
        <end position="258"/>
    </location>
</feature>
<feature type="topological domain" description="Extracellular" evidence="1">
    <location>
        <begin position="259"/>
        <end position="271"/>
    </location>
</feature>
<feature type="transmembrane region" description="Helical; Name=7" evidence="1">
    <location>
        <begin position="272"/>
        <end position="292"/>
    </location>
</feature>
<feature type="topological domain" description="Cytoplasmic" evidence="1">
    <location>
        <begin position="293"/>
        <end position="314"/>
    </location>
</feature>
<feature type="glycosylation site" description="N-linked (GlcNAc...) asparagine" evidence="1">
    <location>
        <position position="5"/>
    </location>
</feature>
<feature type="disulfide bond" evidence="2">
    <location>
        <begin position="97"/>
        <end position="189"/>
    </location>
</feature>
<feature type="sequence variant" id="VAR_062043" description="In dbSNP:rs35607186.">
    <original>T</original>
    <variation>A</variation>
    <location>
        <position position="192"/>
    </location>
</feature>
<feature type="sequence variant" id="VAR_053194" description="In dbSNP:rs11825964.">
    <original>Y</original>
    <variation>H</variation>
    <location>
        <position position="278"/>
    </location>
</feature>
<feature type="sequence variant" id="VAR_034225" description="In dbSNP:rs2449134." evidence="3 4">
    <original>S</original>
    <variation>N</variation>
    <location>
        <position position="294"/>
    </location>
</feature>
<gene>
    <name type="primary">OR5F1</name>
</gene>
<evidence type="ECO:0000255" key="1"/>
<evidence type="ECO:0000255" key="2">
    <source>
        <dbReference type="PROSITE-ProRule" id="PRU00521"/>
    </source>
</evidence>
<evidence type="ECO:0000269" key="3">
    <source>
    </source>
</evidence>
<evidence type="ECO:0000269" key="4">
    <source ref="1"/>
</evidence>
<evidence type="ECO:0000305" key="5"/>
<comment type="function">
    <text evidence="5">Odorant receptor.</text>
</comment>
<comment type="subcellular location">
    <subcellularLocation>
        <location>Cell membrane</location>
        <topology>Multi-pass membrane protein</topology>
    </subcellularLocation>
</comment>
<comment type="similarity">
    <text evidence="2">Belongs to the G-protein coupled receptor 1 family.</text>
</comment>
<comment type="online information" name="Human Olfactory Receptor Data Exploratorium (HORDE)">
    <link uri="http://genome.weizmann.ac.il/horde/card/index/symbol:OR5F1"/>
</comment>